<gene>
    <name evidence="1" type="primary">rplE</name>
    <name type="ordered locus">BQ08110</name>
</gene>
<keyword id="KW-0687">Ribonucleoprotein</keyword>
<keyword id="KW-0689">Ribosomal protein</keyword>
<keyword id="KW-0694">RNA-binding</keyword>
<keyword id="KW-0699">rRNA-binding</keyword>
<keyword id="KW-0820">tRNA-binding</keyword>
<name>RL5_BARQU</name>
<reference key="1">
    <citation type="journal article" date="2004" name="Proc. Natl. Acad. Sci. U.S.A.">
        <title>The louse-borne human pathogen Bartonella quintana is a genomic derivative of the zoonotic agent Bartonella henselae.</title>
        <authorList>
            <person name="Alsmark U.C.M."/>
            <person name="Frank A.C."/>
            <person name="Karlberg E.O."/>
            <person name="Legault B.-A."/>
            <person name="Ardell D.H."/>
            <person name="Canbaeck B."/>
            <person name="Eriksson A.-S."/>
            <person name="Naeslund A.K."/>
            <person name="Handley S.A."/>
            <person name="Huvet M."/>
            <person name="La Scola B."/>
            <person name="Holmberg M."/>
            <person name="Andersson S.G.E."/>
        </authorList>
    </citation>
    <scope>NUCLEOTIDE SEQUENCE [LARGE SCALE GENOMIC DNA]</scope>
    <source>
        <strain>Toulouse</strain>
    </source>
</reference>
<proteinExistence type="inferred from homology"/>
<feature type="chain" id="PRO_0000242972" description="Large ribosomal subunit protein uL5">
    <location>
        <begin position="1"/>
        <end position="185"/>
    </location>
</feature>
<evidence type="ECO:0000255" key="1">
    <source>
        <dbReference type="HAMAP-Rule" id="MF_01333"/>
    </source>
</evidence>
<evidence type="ECO:0000305" key="2"/>
<accession>Q6FZD4</accession>
<dbReference type="EMBL" id="BX897700">
    <property type="protein sequence ID" value="CAF26294.1"/>
    <property type="molecule type" value="Genomic_DNA"/>
</dbReference>
<dbReference type="RefSeq" id="WP_011179541.1">
    <property type="nucleotide sequence ID" value="NC_005955.1"/>
</dbReference>
<dbReference type="SMR" id="Q6FZD4"/>
<dbReference type="KEGG" id="bqu:BQ08110"/>
<dbReference type="eggNOG" id="COG0094">
    <property type="taxonomic scope" value="Bacteria"/>
</dbReference>
<dbReference type="HOGENOM" id="CLU_061015_2_1_5"/>
<dbReference type="OrthoDB" id="9806626at2"/>
<dbReference type="Proteomes" id="UP000000597">
    <property type="component" value="Chromosome"/>
</dbReference>
<dbReference type="GO" id="GO:1990904">
    <property type="term" value="C:ribonucleoprotein complex"/>
    <property type="evidence" value="ECO:0007669"/>
    <property type="project" value="UniProtKB-KW"/>
</dbReference>
<dbReference type="GO" id="GO:0005840">
    <property type="term" value="C:ribosome"/>
    <property type="evidence" value="ECO:0007669"/>
    <property type="project" value="UniProtKB-KW"/>
</dbReference>
<dbReference type="GO" id="GO:0019843">
    <property type="term" value="F:rRNA binding"/>
    <property type="evidence" value="ECO:0007669"/>
    <property type="project" value="UniProtKB-UniRule"/>
</dbReference>
<dbReference type="GO" id="GO:0003735">
    <property type="term" value="F:structural constituent of ribosome"/>
    <property type="evidence" value="ECO:0007669"/>
    <property type="project" value="InterPro"/>
</dbReference>
<dbReference type="GO" id="GO:0000049">
    <property type="term" value="F:tRNA binding"/>
    <property type="evidence" value="ECO:0007669"/>
    <property type="project" value="UniProtKB-UniRule"/>
</dbReference>
<dbReference type="GO" id="GO:0006412">
    <property type="term" value="P:translation"/>
    <property type="evidence" value="ECO:0007669"/>
    <property type="project" value="UniProtKB-UniRule"/>
</dbReference>
<dbReference type="FunFam" id="3.30.1440.10:FF:000001">
    <property type="entry name" value="50S ribosomal protein L5"/>
    <property type="match status" value="1"/>
</dbReference>
<dbReference type="Gene3D" id="3.30.1440.10">
    <property type="match status" value="1"/>
</dbReference>
<dbReference type="HAMAP" id="MF_01333_B">
    <property type="entry name" value="Ribosomal_uL5_B"/>
    <property type="match status" value="1"/>
</dbReference>
<dbReference type="InterPro" id="IPR002132">
    <property type="entry name" value="Ribosomal_uL5"/>
</dbReference>
<dbReference type="InterPro" id="IPR020930">
    <property type="entry name" value="Ribosomal_uL5_bac-type"/>
</dbReference>
<dbReference type="InterPro" id="IPR031309">
    <property type="entry name" value="Ribosomal_uL5_C"/>
</dbReference>
<dbReference type="InterPro" id="IPR020929">
    <property type="entry name" value="Ribosomal_uL5_CS"/>
</dbReference>
<dbReference type="InterPro" id="IPR022803">
    <property type="entry name" value="Ribosomal_uL5_dom_sf"/>
</dbReference>
<dbReference type="InterPro" id="IPR031310">
    <property type="entry name" value="Ribosomal_uL5_N"/>
</dbReference>
<dbReference type="NCBIfam" id="NF000585">
    <property type="entry name" value="PRK00010.1"/>
    <property type="match status" value="1"/>
</dbReference>
<dbReference type="PANTHER" id="PTHR11994">
    <property type="entry name" value="60S RIBOSOMAL PROTEIN L11-RELATED"/>
    <property type="match status" value="1"/>
</dbReference>
<dbReference type="Pfam" id="PF00281">
    <property type="entry name" value="Ribosomal_L5"/>
    <property type="match status" value="1"/>
</dbReference>
<dbReference type="Pfam" id="PF00673">
    <property type="entry name" value="Ribosomal_L5_C"/>
    <property type="match status" value="1"/>
</dbReference>
<dbReference type="PIRSF" id="PIRSF002161">
    <property type="entry name" value="Ribosomal_L5"/>
    <property type="match status" value="1"/>
</dbReference>
<dbReference type="SUPFAM" id="SSF55282">
    <property type="entry name" value="RL5-like"/>
    <property type="match status" value="1"/>
</dbReference>
<dbReference type="PROSITE" id="PS00358">
    <property type="entry name" value="RIBOSOMAL_L5"/>
    <property type="match status" value="1"/>
</dbReference>
<sequence>MAEEKQTPRMKTRYFEVIRKTLQEKFNYKNAMQIPRVDKVVVNMGIGEATIDSKRPSLAAEDLGLITGQKAVVTRARNSIATFKVREGMPLGAKVTLRKDRMFEFLDRLVTIALPRVRDFRGLNPKSFDGRGNFAMGIKEHIVFPEINYDKVDQIWGMDIIVCTTAKTDDEARELLRAFNFPFRS</sequence>
<protein>
    <recommendedName>
        <fullName evidence="1">Large ribosomal subunit protein uL5</fullName>
    </recommendedName>
    <alternativeName>
        <fullName evidence="2">50S ribosomal protein L5</fullName>
    </alternativeName>
</protein>
<comment type="function">
    <text evidence="1">This is one of the proteins that bind and probably mediate the attachment of the 5S RNA into the large ribosomal subunit, where it forms part of the central protuberance. In the 70S ribosome it contacts protein S13 of the 30S subunit (bridge B1b), connecting the 2 subunits; this bridge is implicated in subunit movement. Contacts the P site tRNA; the 5S rRNA and some of its associated proteins might help stabilize positioning of ribosome-bound tRNAs.</text>
</comment>
<comment type="subunit">
    <text evidence="1">Part of the 50S ribosomal subunit; part of the 5S rRNA/L5/L18/L25 subcomplex. Contacts the 5S rRNA and the P site tRNA. Forms a bridge to the 30S subunit in the 70S ribosome.</text>
</comment>
<comment type="similarity">
    <text evidence="1">Belongs to the universal ribosomal protein uL5 family.</text>
</comment>
<organism>
    <name type="scientific">Bartonella quintana (strain Toulouse)</name>
    <name type="common">Rochalimaea quintana</name>
    <dbReference type="NCBI Taxonomy" id="283165"/>
    <lineage>
        <taxon>Bacteria</taxon>
        <taxon>Pseudomonadati</taxon>
        <taxon>Pseudomonadota</taxon>
        <taxon>Alphaproteobacteria</taxon>
        <taxon>Hyphomicrobiales</taxon>
        <taxon>Bartonellaceae</taxon>
        <taxon>Bartonella</taxon>
    </lineage>
</organism>